<name>GCH1_VIBPA</name>
<gene>
    <name evidence="2" type="primary">folE</name>
    <name type="ordered locus">VPA1169</name>
</gene>
<keyword id="KW-0342">GTP-binding</keyword>
<keyword id="KW-0378">Hydrolase</keyword>
<keyword id="KW-0479">Metal-binding</keyword>
<keyword id="KW-0547">Nucleotide-binding</keyword>
<keyword id="KW-0554">One-carbon metabolism</keyword>
<keyword id="KW-0862">Zinc</keyword>
<proteinExistence type="inferred from homology"/>
<reference key="1">
    <citation type="journal article" date="2003" name="Lancet">
        <title>Genome sequence of Vibrio parahaemolyticus: a pathogenic mechanism distinct from that of V. cholerae.</title>
        <authorList>
            <person name="Makino K."/>
            <person name="Oshima K."/>
            <person name="Kurokawa K."/>
            <person name="Yokoyama K."/>
            <person name="Uda T."/>
            <person name="Tagomori K."/>
            <person name="Iijima Y."/>
            <person name="Najima M."/>
            <person name="Nakano M."/>
            <person name="Yamashita A."/>
            <person name="Kubota Y."/>
            <person name="Kimura S."/>
            <person name="Yasunaga T."/>
            <person name="Honda T."/>
            <person name="Shinagawa H."/>
            <person name="Hattori M."/>
            <person name="Iida T."/>
        </authorList>
    </citation>
    <scope>NUCLEOTIDE SEQUENCE [LARGE SCALE GENOMIC DNA]</scope>
    <source>
        <strain>RIMD 2210633</strain>
    </source>
</reference>
<protein>
    <recommendedName>
        <fullName evidence="2">GTP cyclohydrolase 1</fullName>
        <ecNumber evidence="2">3.5.4.16</ecNumber>
    </recommendedName>
    <alternativeName>
        <fullName evidence="2">GTP cyclohydrolase I</fullName>
        <shortName evidence="2">GTP-CH-I</shortName>
    </alternativeName>
</protein>
<feature type="chain" id="PRO_0000119461" description="GTP cyclohydrolase 1">
    <location>
        <begin position="1"/>
        <end position="217"/>
    </location>
</feature>
<feature type="binding site" evidence="2">
    <location>
        <position position="109"/>
    </location>
    <ligand>
        <name>Zn(2+)</name>
        <dbReference type="ChEBI" id="CHEBI:29105"/>
    </ligand>
</feature>
<feature type="binding site" evidence="2">
    <location>
        <position position="112"/>
    </location>
    <ligand>
        <name>Zn(2+)</name>
        <dbReference type="ChEBI" id="CHEBI:29105"/>
    </ligand>
</feature>
<feature type="binding site" evidence="2">
    <location>
        <position position="180"/>
    </location>
    <ligand>
        <name>Zn(2+)</name>
        <dbReference type="ChEBI" id="CHEBI:29105"/>
    </ligand>
</feature>
<evidence type="ECO:0000250" key="1"/>
<evidence type="ECO:0000255" key="2">
    <source>
        <dbReference type="HAMAP-Rule" id="MF_00223"/>
    </source>
</evidence>
<organism>
    <name type="scientific">Vibrio parahaemolyticus serotype O3:K6 (strain RIMD 2210633)</name>
    <dbReference type="NCBI Taxonomy" id="223926"/>
    <lineage>
        <taxon>Bacteria</taxon>
        <taxon>Pseudomonadati</taxon>
        <taxon>Pseudomonadota</taxon>
        <taxon>Gammaproteobacteria</taxon>
        <taxon>Vibrionales</taxon>
        <taxon>Vibrionaceae</taxon>
        <taxon>Vibrio</taxon>
    </lineage>
</organism>
<comment type="catalytic activity">
    <reaction evidence="2">
        <text>GTP + H2O = 7,8-dihydroneopterin 3'-triphosphate + formate + H(+)</text>
        <dbReference type="Rhea" id="RHEA:17473"/>
        <dbReference type="ChEBI" id="CHEBI:15377"/>
        <dbReference type="ChEBI" id="CHEBI:15378"/>
        <dbReference type="ChEBI" id="CHEBI:15740"/>
        <dbReference type="ChEBI" id="CHEBI:37565"/>
        <dbReference type="ChEBI" id="CHEBI:58462"/>
        <dbReference type="EC" id="3.5.4.16"/>
    </reaction>
</comment>
<comment type="pathway">
    <text evidence="2">Cofactor biosynthesis; 7,8-dihydroneopterin triphosphate biosynthesis; 7,8-dihydroneopterin triphosphate from GTP: step 1/1.</text>
</comment>
<comment type="subunit">
    <text evidence="1">Toroid-shaped homodecamer, composed of two pentamers of five dimers.</text>
</comment>
<comment type="similarity">
    <text evidence="2">Belongs to the GTP cyclohydrolase I family.</text>
</comment>
<dbReference type="EC" id="3.5.4.16" evidence="2"/>
<dbReference type="EMBL" id="BA000032">
    <property type="protein sequence ID" value="BAC62512.1"/>
    <property type="molecule type" value="Genomic_DNA"/>
</dbReference>
<dbReference type="RefSeq" id="NP_800679.1">
    <property type="nucleotide sequence ID" value="NC_004605.1"/>
</dbReference>
<dbReference type="RefSeq" id="WP_005477356.1">
    <property type="nucleotide sequence ID" value="NC_004605.1"/>
</dbReference>
<dbReference type="SMR" id="Q87GZ6"/>
<dbReference type="GeneID" id="1191865"/>
<dbReference type="KEGG" id="vpa:VPA1169"/>
<dbReference type="PATRIC" id="fig|223926.6.peg.4095"/>
<dbReference type="eggNOG" id="COG0302">
    <property type="taxonomic scope" value="Bacteria"/>
</dbReference>
<dbReference type="HOGENOM" id="CLU_049768_3_2_6"/>
<dbReference type="UniPathway" id="UPA00848">
    <property type="reaction ID" value="UER00151"/>
</dbReference>
<dbReference type="Proteomes" id="UP000002493">
    <property type="component" value="Chromosome 2"/>
</dbReference>
<dbReference type="GO" id="GO:0005737">
    <property type="term" value="C:cytoplasm"/>
    <property type="evidence" value="ECO:0007669"/>
    <property type="project" value="TreeGrafter"/>
</dbReference>
<dbReference type="GO" id="GO:0005525">
    <property type="term" value="F:GTP binding"/>
    <property type="evidence" value="ECO:0007669"/>
    <property type="project" value="UniProtKB-KW"/>
</dbReference>
<dbReference type="GO" id="GO:0003934">
    <property type="term" value="F:GTP cyclohydrolase I activity"/>
    <property type="evidence" value="ECO:0007669"/>
    <property type="project" value="UniProtKB-UniRule"/>
</dbReference>
<dbReference type="GO" id="GO:0008270">
    <property type="term" value="F:zinc ion binding"/>
    <property type="evidence" value="ECO:0007669"/>
    <property type="project" value="UniProtKB-UniRule"/>
</dbReference>
<dbReference type="GO" id="GO:0006730">
    <property type="term" value="P:one-carbon metabolic process"/>
    <property type="evidence" value="ECO:0007669"/>
    <property type="project" value="UniProtKB-UniRule"/>
</dbReference>
<dbReference type="GO" id="GO:0006729">
    <property type="term" value="P:tetrahydrobiopterin biosynthetic process"/>
    <property type="evidence" value="ECO:0007669"/>
    <property type="project" value="TreeGrafter"/>
</dbReference>
<dbReference type="GO" id="GO:0046654">
    <property type="term" value="P:tetrahydrofolate biosynthetic process"/>
    <property type="evidence" value="ECO:0007669"/>
    <property type="project" value="UniProtKB-UniRule"/>
</dbReference>
<dbReference type="FunFam" id="1.10.286.10:FF:000002">
    <property type="entry name" value="GTP cyclohydrolase 1"/>
    <property type="match status" value="1"/>
</dbReference>
<dbReference type="FunFam" id="3.30.1130.10:FF:000001">
    <property type="entry name" value="GTP cyclohydrolase 1"/>
    <property type="match status" value="1"/>
</dbReference>
<dbReference type="Gene3D" id="1.10.286.10">
    <property type="match status" value="1"/>
</dbReference>
<dbReference type="Gene3D" id="3.30.1130.10">
    <property type="match status" value="1"/>
</dbReference>
<dbReference type="HAMAP" id="MF_00223">
    <property type="entry name" value="FolE"/>
    <property type="match status" value="1"/>
</dbReference>
<dbReference type="InterPro" id="IPR043133">
    <property type="entry name" value="GTP-CH-I_C/QueF"/>
</dbReference>
<dbReference type="InterPro" id="IPR043134">
    <property type="entry name" value="GTP-CH-I_N"/>
</dbReference>
<dbReference type="InterPro" id="IPR001474">
    <property type="entry name" value="GTP_CycHdrlase_I"/>
</dbReference>
<dbReference type="InterPro" id="IPR018234">
    <property type="entry name" value="GTP_CycHdrlase_I_CS"/>
</dbReference>
<dbReference type="InterPro" id="IPR020602">
    <property type="entry name" value="GTP_CycHdrlase_I_dom"/>
</dbReference>
<dbReference type="NCBIfam" id="TIGR00063">
    <property type="entry name" value="folE"/>
    <property type="match status" value="1"/>
</dbReference>
<dbReference type="NCBIfam" id="NF006824">
    <property type="entry name" value="PRK09347.1-1"/>
    <property type="match status" value="1"/>
</dbReference>
<dbReference type="NCBIfam" id="NF006825">
    <property type="entry name" value="PRK09347.1-2"/>
    <property type="match status" value="1"/>
</dbReference>
<dbReference type="NCBIfam" id="NF006826">
    <property type="entry name" value="PRK09347.1-3"/>
    <property type="match status" value="1"/>
</dbReference>
<dbReference type="PANTHER" id="PTHR11109:SF7">
    <property type="entry name" value="GTP CYCLOHYDROLASE 1"/>
    <property type="match status" value="1"/>
</dbReference>
<dbReference type="PANTHER" id="PTHR11109">
    <property type="entry name" value="GTP CYCLOHYDROLASE I"/>
    <property type="match status" value="1"/>
</dbReference>
<dbReference type="Pfam" id="PF01227">
    <property type="entry name" value="GTP_cyclohydroI"/>
    <property type="match status" value="1"/>
</dbReference>
<dbReference type="SUPFAM" id="SSF55620">
    <property type="entry name" value="Tetrahydrobiopterin biosynthesis enzymes-like"/>
    <property type="match status" value="1"/>
</dbReference>
<dbReference type="PROSITE" id="PS00859">
    <property type="entry name" value="GTP_CYCLOHYDROL_1_1"/>
    <property type="match status" value="1"/>
</dbReference>
<dbReference type="PROSITE" id="PS00860">
    <property type="entry name" value="GTP_CYCLOHYDROL_1_2"/>
    <property type="match status" value="1"/>
</dbReference>
<sequence length="217" mass="24395">MSGLSESAKLVKEALEQRGLETPMRPNAVSREEKKEKIEHHMREILTLLQLDLTDDSLEETPHRIAKMYVDEIFSGLDYSNFPKITVIENKMNVSEMVRVKDITVTSTCEHHLVTIDGKAAVAYIPRGKIIGLSKINRIVRFFAQRPQVQERMTQQILVALQTLLESDDVAVTIDATHYCVKSRGVMDATSETTTTALGGIFKSNPATRAEFLHGLR</sequence>
<accession>Q87GZ6</accession>